<organism>
    <name type="scientific">Mus musculus</name>
    <name type="common">Mouse</name>
    <dbReference type="NCBI Taxonomy" id="10090"/>
    <lineage>
        <taxon>Eukaryota</taxon>
        <taxon>Metazoa</taxon>
        <taxon>Chordata</taxon>
        <taxon>Craniata</taxon>
        <taxon>Vertebrata</taxon>
        <taxon>Euteleostomi</taxon>
        <taxon>Mammalia</taxon>
        <taxon>Eutheria</taxon>
        <taxon>Euarchontoglires</taxon>
        <taxon>Glires</taxon>
        <taxon>Rodentia</taxon>
        <taxon>Myomorpha</taxon>
        <taxon>Muroidea</taxon>
        <taxon>Muridae</taxon>
        <taxon>Murinae</taxon>
        <taxon>Mus</taxon>
        <taxon>Mus</taxon>
    </lineage>
</organism>
<proteinExistence type="evidence at protein level"/>
<gene>
    <name evidence="19" type="primary">Zfp36l2</name>
    <name evidence="17" type="synonym">Tis11d</name>
</gene>
<accession>P23949</accession>
<accession>B9EIF6</accession>
<accession>Q3TCE3</accession>
<accession>Q3TU59</accession>
<reference key="1">
    <citation type="journal article" date="2005" name="Science">
        <title>The transcriptional landscape of the mammalian genome.</title>
        <authorList>
            <person name="Carninci P."/>
            <person name="Kasukawa T."/>
            <person name="Katayama S."/>
            <person name="Gough J."/>
            <person name="Frith M.C."/>
            <person name="Maeda N."/>
            <person name="Oyama R."/>
            <person name="Ravasi T."/>
            <person name="Lenhard B."/>
            <person name="Wells C."/>
            <person name="Kodzius R."/>
            <person name="Shimokawa K."/>
            <person name="Bajic V.B."/>
            <person name="Brenner S.E."/>
            <person name="Batalov S."/>
            <person name="Forrest A.R."/>
            <person name="Zavolan M."/>
            <person name="Davis M.J."/>
            <person name="Wilming L.G."/>
            <person name="Aidinis V."/>
            <person name="Allen J.E."/>
            <person name="Ambesi-Impiombato A."/>
            <person name="Apweiler R."/>
            <person name="Aturaliya R.N."/>
            <person name="Bailey T.L."/>
            <person name="Bansal M."/>
            <person name="Baxter L."/>
            <person name="Beisel K.W."/>
            <person name="Bersano T."/>
            <person name="Bono H."/>
            <person name="Chalk A.M."/>
            <person name="Chiu K.P."/>
            <person name="Choudhary V."/>
            <person name="Christoffels A."/>
            <person name="Clutterbuck D.R."/>
            <person name="Crowe M.L."/>
            <person name="Dalla E."/>
            <person name="Dalrymple B.P."/>
            <person name="de Bono B."/>
            <person name="Della Gatta G."/>
            <person name="di Bernardo D."/>
            <person name="Down T."/>
            <person name="Engstrom P."/>
            <person name="Fagiolini M."/>
            <person name="Faulkner G."/>
            <person name="Fletcher C.F."/>
            <person name="Fukushima T."/>
            <person name="Furuno M."/>
            <person name="Futaki S."/>
            <person name="Gariboldi M."/>
            <person name="Georgii-Hemming P."/>
            <person name="Gingeras T.R."/>
            <person name="Gojobori T."/>
            <person name="Green R.E."/>
            <person name="Gustincich S."/>
            <person name="Harbers M."/>
            <person name="Hayashi Y."/>
            <person name="Hensch T.K."/>
            <person name="Hirokawa N."/>
            <person name="Hill D."/>
            <person name="Huminiecki L."/>
            <person name="Iacono M."/>
            <person name="Ikeo K."/>
            <person name="Iwama A."/>
            <person name="Ishikawa T."/>
            <person name="Jakt M."/>
            <person name="Kanapin A."/>
            <person name="Katoh M."/>
            <person name="Kawasawa Y."/>
            <person name="Kelso J."/>
            <person name="Kitamura H."/>
            <person name="Kitano H."/>
            <person name="Kollias G."/>
            <person name="Krishnan S.P."/>
            <person name="Kruger A."/>
            <person name="Kummerfeld S.K."/>
            <person name="Kurochkin I.V."/>
            <person name="Lareau L.F."/>
            <person name="Lazarevic D."/>
            <person name="Lipovich L."/>
            <person name="Liu J."/>
            <person name="Liuni S."/>
            <person name="McWilliam S."/>
            <person name="Madan Babu M."/>
            <person name="Madera M."/>
            <person name="Marchionni L."/>
            <person name="Matsuda H."/>
            <person name="Matsuzawa S."/>
            <person name="Miki H."/>
            <person name="Mignone F."/>
            <person name="Miyake S."/>
            <person name="Morris K."/>
            <person name="Mottagui-Tabar S."/>
            <person name="Mulder N."/>
            <person name="Nakano N."/>
            <person name="Nakauchi H."/>
            <person name="Ng P."/>
            <person name="Nilsson R."/>
            <person name="Nishiguchi S."/>
            <person name="Nishikawa S."/>
            <person name="Nori F."/>
            <person name="Ohara O."/>
            <person name="Okazaki Y."/>
            <person name="Orlando V."/>
            <person name="Pang K.C."/>
            <person name="Pavan W.J."/>
            <person name="Pavesi G."/>
            <person name="Pesole G."/>
            <person name="Petrovsky N."/>
            <person name="Piazza S."/>
            <person name="Reed J."/>
            <person name="Reid J.F."/>
            <person name="Ring B.Z."/>
            <person name="Ringwald M."/>
            <person name="Rost B."/>
            <person name="Ruan Y."/>
            <person name="Salzberg S.L."/>
            <person name="Sandelin A."/>
            <person name="Schneider C."/>
            <person name="Schoenbach C."/>
            <person name="Sekiguchi K."/>
            <person name="Semple C.A."/>
            <person name="Seno S."/>
            <person name="Sessa L."/>
            <person name="Sheng Y."/>
            <person name="Shibata Y."/>
            <person name="Shimada H."/>
            <person name="Shimada K."/>
            <person name="Silva D."/>
            <person name="Sinclair B."/>
            <person name="Sperling S."/>
            <person name="Stupka E."/>
            <person name="Sugiura K."/>
            <person name="Sultana R."/>
            <person name="Takenaka Y."/>
            <person name="Taki K."/>
            <person name="Tammoja K."/>
            <person name="Tan S.L."/>
            <person name="Tang S."/>
            <person name="Taylor M.S."/>
            <person name="Tegner J."/>
            <person name="Teichmann S.A."/>
            <person name="Ueda H.R."/>
            <person name="van Nimwegen E."/>
            <person name="Verardo R."/>
            <person name="Wei C.L."/>
            <person name="Yagi K."/>
            <person name="Yamanishi H."/>
            <person name="Zabarovsky E."/>
            <person name="Zhu S."/>
            <person name="Zimmer A."/>
            <person name="Hide W."/>
            <person name="Bult C."/>
            <person name="Grimmond S.M."/>
            <person name="Teasdale R.D."/>
            <person name="Liu E.T."/>
            <person name="Brusic V."/>
            <person name="Quackenbush J."/>
            <person name="Wahlestedt C."/>
            <person name="Mattick J.S."/>
            <person name="Hume D.A."/>
            <person name="Kai C."/>
            <person name="Sasaki D."/>
            <person name="Tomaru Y."/>
            <person name="Fukuda S."/>
            <person name="Kanamori-Katayama M."/>
            <person name="Suzuki M."/>
            <person name="Aoki J."/>
            <person name="Arakawa T."/>
            <person name="Iida J."/>
            <person name="Imamura K."/>
            <person name="Itoh M."/>
            <person name="Kato T."/>
            <person name="Kawaji H."/>
            <person name="Kawagashira N."/>
            <person name="Kawashima T."/>
            <person name="Kojima M."/>
            <person name="Kondo S."/>
            <person name="Konno H."/>
            <person name="Nakano K."/>
            <person name="Ninomiya N."/>
            <person name="Nishio T."/>
            <person name="Okada M."/>
            <person name="Plessy C."/>
            <person name="Shibata K."/>
            <person name="Shiraki T."/>
            <person name="Suzuki S."/>
            <person name="Tagami M."/>
            <person name="Waki K."/>
            <person name="Watahiki A."/>
            <person name="Okamura-Oho Y."/>
            <person name="Suzuki H."/>
            <person name="Kawai J."/>
            <person name="Hayashizaki Y."/>
        </authorList>
    </citation>
    <scope>NUCLEOTIDE SEQUENCE [LARGE SCALE MRNA]</scope>
    <source>
        <strain>C57BL/6J</strain>
        <strain>NOD</strain>
        <tissue>Head</tissue>
    </source>
</reference>
<reference key="2">
    <citation type="journal article" date="2009" name="PLoS Biol.">
        <title>Lineage-specific biology revealed by a finished genome assembly of the mouse.</title>
        <authorList>
            <person name="Church D.M."/>
            <person name="Goodstadt L."/>
            <person name="Hillier L.W."/>
            <person name="Zody M.C."/>
            <person name="Goldstein S."/>
            <person name="She X."/>
            <person name="Bult C.J."/>
            <person name="Agarwala R."/>
            <person name="Cherry J.L."/>
            <person name="DiCuccio M."/>
            <person name="Hlavina W."/>
            <person name="Kapustin Y."/>
            <person name="Meric P."/>
            <person name="Maglott D."/>
            <person name="Birtle Z."/>
            <person name="Marques A.C."/>
            <person name="Graves T."/>
            <person name="Zhou S."/>
            <person name="Teague B."/>
            <person name="Potamousis K."/>
            <person name="Churas C."/>
            <person name="Place M."/>
            <person name="Herschleb J."/>
            <person name="Runnheim R."/>
            <person name="Forrest D."/>
            <person name="Amos-Landgraf J."/>
            <person name="Schwartz D.C."/>
            <person name="Cheng Z."/>
            <person name="Lindblad-Toh K."/>
            <person name="Eichler E.E."/>
            <person name="Ponting C.P."/>
        </authorList>
    </citation>
    <scope>NUCLEOTIDE SEQUENCE [LARGE SCALE GENOMIC DNA]</scope>
    <source>
        <strain>C57BL/6J</strain>
    </source>
</reference>
<reference key="3">
    <citation type="journal article" date="2004" name="Genome Res.">
        <title>The status, quality, and expansion of the NIH full-length cDNA project: the Mammalian Gene Collection (MGC).</title>
        <authorList>
            <consortium name="The MGC Project Team"/>
        </authorList>
    </citation>
    <scope>NUCLEOTIDE SEQUENCE [LARGE SCALE MRNA]</scope>
    <source>
        <tissue>Brain</tissue>
    </source>
</reference>
<reference key="4">
    <citation type="thesis" date="1992" institute="University of California Los Angeles" country="United States">
        <title>Structure and expression of two mitogen inducible genes.</title>
        <authorList>
            <person name="Fletcher B.S."/>
        </authorList>
    </citation>
    <scope>NUCLEOTIDE SEQUENCE [GENOMIC DNA] OF 1-50</scope>
</reference>
<reference key="5">
    <citation type="journal article" date="1991" name="Mol. Cell. Biol.">
        <title>The TIS11 primary response gene is a member of a gene family that encodes proteins with a highly conserved sequence containing an unusual Cys-His repeat.</title>
        <authorList>
            <person name="Varnum B.C."/>
            <person name="Ma Q."/>
            <person name="Chi T."/>
            <person name="Fletcher B.S."/>
            <person name="Herschman H.R."/>
        </authorList>
    </citation>
    <scope>NUCLEOTIDE SEQUENCE [MRNA] OF 25-396</scope>
    <source>
        <strain>BALB/cJ</strain>
    </source>
</reference>
<reference key="6">
    <citation type="journal article" date="2002" name="J. Biol. Chem.">
        <title>Members of the tristetraprolin family of tandem CCCH zinc finger proteins exhibit CRM1-dependent nucleocytoplasmic shuttling.</title>
        <authorList>
            <person name="Phillips R.S."/>
            <person name="Ramos S.B."/>
            <person name="Blackshear P.J."/>
        </authorList>
    </citation>
    <scope>SUBCELLULAR LOCATION</scope>
</reference>
<reference key="7">
    <citation type="journal article" date="2004" name="Development">
        <title>The CCCH tandem zinc-finger protein Zfp36l2 is crucial for female fertility and early embryonic development.</title>
        <authorList>
            <person name="Ramos S.B."/>
            <person name="Stumpo D.J."/>
            <person name="Kennington E.A."/>
            <person name="Phillips R.S."/>
            <person name="Bock C.B."/>
            <person name="Ribeiro-Neto F."/>
            <person name="Blackshear P.J."/>
        </authorList>
    </citation>
    <scope>DISRUPTION PHENOTYPE</scope>
</reference>
<reference key="8">
    <citation type="journal article" date="2009" name="Blood">
        <title>Targeted disruption of Zfp36l2, encoding a CCCH tandem zinc finger RNA-binding protein, results in defective hematopoiesis.</title>
        <authorList>
            <person name="Stumpo D.J."/>
            <person name="Broxmeyer H.E."/>
            <person name="Ward T."/>
            <person name="Cooper S."/>
            <person name="Hangoc G."/>
            <person name="Chung Y.J."/>
            <person name="Shelley W.C."/>
            <person name="Richfield E.K."/>
            <person name="Ray M.K."/>
            <person name="Yoder M.C."/>
            <person name="Aplan P.D."/>
            <person name="Blackshear P.J."/>
        </authorList>
    </citation>
    <scope>FUNCTION</scope>
    <scope>DISRUPTION PHENOTYPE</scope>
    <scope>TISSUE SPECIFICITY</scope>
    <scope>DEVELOPMENTAL STAGE</scope>
</reference>
<reference key="9">
    <citation type="journal article" date="2010" name="Nat. Immunol.">
        <title>Deletion of the RNA-binding proteins ZFP36L1 and ZFP36L2 leads to perturbed thymic development and T lymphoblastic leukemia.</title>
        <authorList>
            <person name="Hodson D.J."/>
            <person name="Janas M.L."/>
            <person name="Galloway A."/>
            <person name="Bell S.E."/>
            <person name="Andrews S."/>
            <person name="Li C.M."/>
            <person name="Pannell R."/>
            <person name="Siebel C.W."/>
            <person name="MacDonald H.R."/>
            <person name="De Keersmaecker K."/>
            <person name="Ferrando A.A."/>
            <person name="Grutz G."/>
            <person name="Turner M."/>
        </authorList>
    </citation>
    <scope>FUNCTION</scope>
    <scope>RNA-BINDING</scope>
    <scope>DISRUPTION PHENOTYPE</scope>
</reference>
<reference key="10">
    <citation type="journal article" date="2012" name="Int. J. Biol. Sci.">
        <title>Differential expression and functional analysis of the tristetraprolin family during early differentiation of 3T3-L1 preadipocytes.</title>
        <authorList>
            <person name="Lin N.Y."/>
            <person name="Lin T.Y."/>
            <person name="Yang W.H."/>
            <person name="Wang S.C."/>
            <person name="Wang K.T."/>
            <person name="Su Y.L."/>
            <person name="Jiang Y.W."/>
            <person name="Chang G.D."/>
            <person name="Chang C.J."/>
        </authorList>
    </citation>
    <scope>FUNCTION</scope>
    <scope>RNA-BINDING</scope>
    <scope>PHOSPHORYLATION</scope>
    <scope>TISSUE SPECIFICITY</scope>
</reference>
<reference key="11">
    <citation type="journal article" date="2012" name="J. Biol. Chem.">
        <title>Characterization of DeltaN-Zfp36l2 mutant associated with arrest of early embryonic development and female infertility.</title>
        <authorList>
            <person name="Ramos S.B."/>
        </authorList>
    </citation>
    <scope>FUNCTION</scope>
    <scope>SUBCELLULAR LOCATION</scope>
    <scope>TISSUE SPECIFICITY</scope>
</reference>
<reference key="12">
    <citation type="journal article" date="2012" name="Skelet. Muscle">
        <title>A role for RNA post-transcriptional regulation in satellite cell activation.</title>
        <authorList>
            <person name="Farina N.H."/>
            <person name="Hausburg M."/>
            <person name="Betta N.D."/>
            <person name="Pulliam C."/>
            <person name="Srivastava D."/>
            <person name="Cornelison D."/>
            <person name="Olwin B.B."/>
        </authorList>
    </citation>
    <scope>INDUCTION</scope>
</reference>
<reference key="13">
    <citation type="journal article" date="2013" name="Nature">
        <title>ZFP36L2 is required for self-renewal of early burst-forming unit erythroid progenitors.</title>
        <authorList>
            <person name="Zhang L."/>
            <person name="Prak L."/>
            <person name="Rayon-Estrada V."/>
            <person name="Thiru P."/>
            <person name="Flygare J."/>
            <person name="Lim B."/>
            <person name="Lodish H.F."/>
        </authorList>
    </citation>
    <scope>FUNCTION</scope>
    <scope>DEVELOPMENTAL STAGE</scope>
    <scope>INDUCTION</scope>
    <scope>RNA-BINDING</scope>
</reference>
<reference key="14">
    <citation type="journal article" date="2014" name="J. Neurosci.">
        <title>An RNA binding protein promotes axonal integrity in peripheral neurons by destabilizing REST.</title>
        <authorList>
            <person name="Cargnin F."/>
            <person name="Nechiporuk T."/>
            <person name="Muellendorff K."/>
            <person name="Stumpo D.J."/>
            <person name="Blackshear P.J."/>
            <person name="Ballas N."/>
            <person name="Mandel G."/>
        </authorList>
    </citation>
    <scope>FUNCTION</scope>
    <scope>RNA-BINDING</scope>
    <scope>DISRUPTION PHENOTYPE</scope>
    <scope>MUTAGENESIS OF CYS-176</scope>
    <scope>TISSUE SPECIFICITY</scope>
</reference>
<reference key="15">
    <citation type="journal article" date="2014" name="PLoS ONE">
        <title>The RNA-binding protein, ZFP36L2, influences ovulation and oocyte maturation.</title>
        <authorList>
            <person name="Ball C.B."/>
            <person name="Rodriguez K.F."/>
            <person name="Stumpo D.J."/>
            <person name="Ribeiro-Neto F."/>
            <person name="Korach K.S."/>
            <person name="Blackshear P.J."/>
            <person name="Birnbaumer L."/>
            <person name="Ramos S.B."/>
        </authorList>
    </citation>
    <scope>FUNCTION</scope>
    <scope>RNA-BINDING</scope>
</reference>
<reference key="16">
    <citation type="journal article" date="2014" name="Proc. Natl. Acad. Sci. U.S.A.">
        <title>Brf1 posttranscriptionally regulates pluripotency and differentiation responses downstream of Erk MAP kinase.</title>
        <authorList>
            <person name="Tan F.E."/>
            <person name="Elowitz M.B."/>
        </authorList>
    </citation>
    <scope>SUBCELLULAR LOCATION</scope>
    <scope>TISSUE SPECIFICITY</scope>
    <scope>INDUCTION</scope>
</reference>
<reference key="17">
    <citation type="journal article" date="2015" name="Elife">
        <title>Post-transcriptional regulation of satellite cell quiescence by TTP-mediated mRNA decay.</title>
        <authorList>
            <person name="Hausburg M.A."/>
            <person name="Doles J.D."/>
            <person name="Clement S.L."/>
            <person name="Cadwallader A.B."/>
            <person name="Hall M.N."/>
            <person name="Blackshear P.J."/>
            <person name="Lykke-Andersen J."/>
            <person name="Olwin B.B."/>
        </authorList>
    </citation>
    <scope>INDUCTION</scope>
</reference>
<reference key="18">
    <citation type="journal article" date="2016" name="Science">
        <title>RNA-binding proteins ZFP36L1 and ZFP36L2 promote cell quiescence.</title>
        <authorList>
            <person name="Galloway A."/>
            <person name="Saveliev A."/>
            <person name="Lukasiak S."/>
            <person name="Hodson D.J."/>
            <person name="Bolland D."/>
            <person name="Balmanno K."/>
            <person name="Ahlfors H."/>
            <person name="Monzon-Casanova E."/>
            <person name="Mannurita S.C."/>
            <person name="Bell L.S."/>
            <person name="Andrews S."/>
            <person name="Diaz-Munoz M.D."/>
            <person name="Cook S.J."/>
            <person name="Corcoran A."/>
            <person name="Turner M."/>
        </authorList>
    </citation>
    <scope>FUNCTION</scope>
    <scope>DISRUPTION PHENOTYPE</scope>
    <scope>CONDITIONAL KNOCKOUT IN LYMPHOCYTE B CELLS</scope>
    <scope>TISSUE SPECIFICITY</scope>
</reference>
<comment type="function">
    <text evidence="1 6 7 8 9 11 13 14 16">Zinc-finger RNA-binding protein that destabilizes several cytoplasmic AU-rich element (ARE)-containing mRNA transcripts by promoting their poly(A) tail removal or deadenylation, and hence provide a mechanism for attenuating protein synthesis (PubMed:22367205, PubMed:22701344, PubMed:24830504, PubMed:25505318, PubMed:27102483). Acts as a 3'-untranslated region (UTR) ARE mRNA-binding adapter protein to communicate signaling events to the mRNA decay machinery (By similarity). Functions by recruiting the CCR4-NOT deadenylase complex and probably other components of the cytoplasmic RNA decay machinery to the bound ARE-containing mRNAs, and hence promotes ARE-mediated mRNA deadenylation and decay processes (By similarity). Binds to 3'-UTR ARE of numerous mRNAs (PubMed:22367205, PubMed:22701344, PubMed:24830504, PubMed:25505318). Promotes ARE-containing mRNA decay of the low-density lipoprotein (LDL) receptor (LDLR) mRNA in response to phorbol 12-myristate 13-acetate (PMA) treatment in a p38 MAPK-dependent manner (By similarity). Positively regulates early adipogenesis by promoting ARE-mediated mRNA decay of immediate early genes (IEGs) (PubMed:22701344). Plays a role in mature peripheral neuron integrity by promoting ARE-containing mRNA decay of the transcriptional repressor REST mRNA (PubMed:25505318). Plays a role in ovulation and oocyte meiotic maturation by promoting ARE-mediated mRNA decay of the luteinizing hormone receptor LHCGR mRNA (PubMed:24830504). Acts as a negative regulator of erythroid cell differentiation: promotes glucocorticoid-induced self-renewal of erythroid cells by binding mRNAs that are induced or highly expressed during terminal erythroid differentiation and promotes their degradation, preventing erythroid cell differentiation (PubMed:19633199, PubMed:23748442). In association with ZFP36L1 maintains quiescence on developing B lymphocytes by promoting ARE-mediated decay of several mRNAs encoding cell cycle regulators that help B cells progress through the cell cycle, and hence ensuring accurate variable-diversity-joining (VDJ) recombination process and functional immune cell formation (PubMed:27102483). Together with ZFP36L1 is also necessary for thymocyte development and prevention of T-cell acute lymphoblastic leukemia (T-ALL) transformation by promoting ARE-mediated mRNA decay of the oncogenic transcription factor NOTCH1 mRNA (PubMed:20622884).</text>
</comment>
<comment type="subunit">
    <text evidence="1">Associates with the cytoplasmic CCR4-NOT deadenylase to trigger ARE-containing mRNA deadenylation and decay processes. Interacts with CNOT7; this interaction is inhibited in response to phorbol 12-myristate 13-acetate (PMA) treatment in a p38 MAPK-dependent manner. Interacts with CNOT6L.</text>
</comment>
<comment type="subcellular location">
    <subcellularLocation>
        <location evidence="4 8 12">Nucleus</location>
    </subcellularLocation>
    <subcellularLocation>
        <location evidence="4 8 12">Cytoplasm</location>
    </subcellularLocation>
    <text evidence="4 8">Shuttles between the nucleus and the cytoplasm in a XPO1/CRM1-dependent manner (PubMed:11796723, PubMed:22367205).</text>
</comment>
<comment type="tissue specificity">
    <text evidence="1 6 8 9 12 14 16">Expressed in preadipocytes and adipocytes (at protein level) (PubMed:22701344). Expressed at highest level in lymphoid tissues such as thymus, spleen, lung, uterus, ovary, small and large intestine, mammary gland, fat and bone marrow (PubMed:19633199, PubMed:22367205). Expressed at intermediate level in kidney, heart, adrenal, eye and fetal liver (PubMed:19633199). Weakly expressed in brain, skeletal muscle and liver (PubMed:19633199, PubMed:22367205). Expressed through B lymphocyte development (PubMed:27102483). Expressed in superior cervical ganglion (SCG) and dorsal root ganglion (DRG) (PubMed:25505318). Expressed in embryonic stem cells (ESCs) (PubMed:24733888). Expressed in oocytes.</text>
</comment>
<comment type="developmental stage">
    <text evidence="6 11">In embryos, expression is detected at 7 dpc, increases at 9.5 dpc, and then remains constant through 18.5 dpc (PubMed:19633199). Expression in the yolk sac is relatively constant between 10.5 dpc and 18.5 dpc (PubMed:19633199). Placenta expression is also constant throughout development with a slight decrease observed at 18.5 dpc (PubMed:19633199). Expressed in burst-forming unit-erythroid (BFU-E) progenitor cells and down-regulated as erythroid cells differentiate (PubMed:23748442).</text>
</comment>
<comment type="induction">
    <text evidence="10 11 12 15">Up-regulated in response to fibroblast growth factor FGF4 in embryonic stem cells (ESCs) in a p38 MAPK-dependent manner (at protein level) (PubMed:24733888). Up-regulated by glucocorticoid agonists, such as dexamethasone (DEX), in burst-forming unit-erythroid (BFU-E) progenitors in a receptor NR3C1-dependent manner (PubMed:23748442). Down-regulated during erythroid cell differentiation (PubMed:23748442). Down-regulated during the conversion from quiescence to activated satellite cells upon muscle injury (PubMed:23046558, PubMed:25815583).</text>
</comment>
<comment type="PTM">
    <text evidence="1 9">Phosphorylated by RPS6KA1 at Ser-480 and Ser-482 upon phorbol 12-myristate 13-acetate (PMA) treatment; this phosphorylation results in dissociation of the CCR4-NOT-deadenylase complex and induces p38 MAPK-mediated stabilization of the low-density lipoprotein (LDL) receptor (LDLR) mRNA (By similarity). Phosphorylation occurs during early preadipocyte differentiation (PubMed:22701344).</text>
</comment>
<comment type="disruption phenotype">
    <text evidence="5 6 7 14 16">Lethality between 2 weeks of birth, due to pancytopenia (PubMed:19633199). Peripheral blood shows a decrease in red and white cells, hemoglobin, hematocrit and platelets (PubMed:19633199). Yolk sacs from 11.5 dpc and fetal livers from 14.5 dpc display markedly reduced numbers of definitive multilineage and lineage-committed hematopoietic progenitors (PubMed:19633199). Mice lacking the N-terminus (DeltaN-ZFP36L2) display female infertility, with embryos that cannot progress beyond the 2-cell stage of development (PubMed:15342461). Show evidence of axonal and fiber degeneration (PubMed:25505318). Exhibit increased REST mRNA stability and REST protein expression in primary neuronal cells from superior cervical ganglion (SCG) and dorsal root ganglion (DRG) (PubMed:25505318). Mice lacking both ZFP36L2 and ZFP36L1 during thymopoiesis lead to aberrant T cell development and subsequently develop a T-cell acute lymphoblastic leukemia (T-ALL) (PubMed:20622884). Show also higher levels of NOTCH1 mRNA and protein in thymocytes (PubMed:20622884). Conditional knockout mice of both ZFP36L2 and ZFP36L1 in pro-B cells display reduced B lymphocyte number and delayed variable-diversity-joining (VDJ) recombination (PubMed:27102483). Exhibit also increased protein and ARE-containing mRNA expressions of several factors implicated in cell cycle progression in late pre-B cells (PubMed:27102483).</text>
</comment>
<comment type="sequence caution" evidence="18">
    <conflict type="erroneous gene model prediction">
        <sequence resource="EMBL-CDS" id="AAA39709"/>
    </conflict>
</comment>
<comment type="sequence caution" evidence="18">
    <conflict type="erroneous initiation">
        <sequence resource="EMBL-CDS" id="AAA72946"/>
    </conflict>
    <text>Truncated N-terminus.</text>
</comment>
<comment type="sequence caution" evidence="18">
    <conflict type="frameshift">
        <sequence resource="EMBL-CDS" id="AAA72946"/>
    </conflict>
</comment>
<protein>
    <recommendedName>
        <fullName evidence="18">mRNA decay activator protein ZFP36L2</fullName>
    </recommendedName>
    <alternativeName>
        <fullName evidence="1">Butyrate response factor 2</fullName>
    </alternativeName>
    <alternativeName>
        <fullName evidence="17">TPA-induced sequence 11d</fullName>
    </alternativeName>
    <alternativeName>
        <fullName evidence="19">Zinc finger protein 36, C3H1 type-like 2</fullName>
        <shortName evidence="19">ZFP36-like 2</shortName>
    </alternativeName>
</protein>
<feature type="chain" id="PRO_0000089171" description="mRNA decay activator protein ZFP36L2">
    <location>
        <begin position="1"/>
        <end position="484"/>
    </location>
</feature>
<feature type="zinc finger region" description="C3H1-type 1" evidence="2">
    <location>
        <begin position="155"/>
        <end position="183"/>
    </location>
</feature>
<feature type="zinc finger region" description="C3H1-type 2" evidence="2">
    <location>
        <begin position="193"/>
        <end position="221"/>
    </location>
</feature>
<feature type="region of interest" description="Disordered" evidence="3">
    <location>
        <begin position="100"/>
        <end position="152"/>
    </location>
</feature>
<feature type="region of interest" description="RNA-binding" evidence="1">
    <location>
        <begin position="172"/>
        <end position="213"/>
    </location>
</feature>
<feature type="region of interest" description="Disordered" evidence="3">
    <location>
        <begin position="261"/>
        <end position="304"/>
    </location>
</feature>
<feature type="region of interest" description="Disordered" evidence="3">
    <location>
        <begin position="395"/>
        <end position="484"/>
    </location>
</feature>
<feature type="short sequence motif" description="RNA-binding" evidence="1">
    <location>
        <begin position="155"/>
        <end position="160"/>
    </location>
</feature>
<feature type="compositionally biased region" description="Basic and acidic residues" evidence="3">
    <location>
        <begin position="117"/>
        <end position="134"/>
    </location>
</feature>
<feature type="compositionally biased region" description="Pro residues" evidence="3">
    <location>
        <begin position="401"/>
        <end position="418"/>
    </location>
</feature>
<feature type="compositionally biased region" description="Low complexity" evidence="3">
    <location>
        <begin position="449"/>
        <end position="468"/>
    </location>
</feature>
<feature type="modified residue" description="Phosphoserine" evidence="1">
    <location>
        <position position="57"/>
    </location>
</feature>
<feature type="modified residue" description="Phosphoserine" evidence="1">
    <location>
        <position position="127"/>
    </location>
</feature>
<feature type="modified residue" description="Phosphoserine; by RPS6KA1" evidence="1">
    <location>
        <position position="480"/>
    </location>
</feature>
<feature type="modified residue" description="Phosphoserine; by RPS6KA1" evidence="1">
    <location>
        <position position="482"/>
    </location>
</feature>
<feature type="mutagenesis site" description="Inhibits RNA-binding." evidence="14">
    <original>C</original>
    <variation>S</variation>
    <location>
        <position position="176"/>
    </location>
</feature>
<feature type="sequence conflict" description="In Ref. 1; BAE42014." evidence="18" ref="1">
    <original>A</original>
    <variation>T</variation>
    <location>
        <position position="413"/>
    </location>
</feature>
<evidence type="ECO:0000250" key="1">
    <source>
        <dbReference type="UniProtKB" id="P47974"/>
    </source>
</evidence>
<evidence type="ECO:0000255" key="2">
    <source>
        <dbReference type="PROSITE-ProRule" id="PRU00723"/>
    </source>
</evidence>
<evidence type="ECO:0000256" key="3">
    <source>
        <dbReference type="SAM" id="MobiDB-lite"/>
    </source>
</evidence>
<evidence type="ECO:0000269" key="4">
    <source>
    </source>
</evidence>
<evidence type="ECO:0000269" key="5">
    <source>
    </source>
</evidence>
<evidence type="ECO:0000269" key="6">
    <source>
    </source>
</evidence>
<evidence type="ECO:0000269" key="7">
    <source>
    </source>
</evidence>
<evidence type="ECO:0000269" key="8">
    <source>
    </source>
</evidence>
<evidence type="ECO:0000269" key="9">
    <source>
    </source>
</evidence>
<evidence type="ECO:0000269" key="10">
    <source>
    </source>
</evidence>
<evidence type="ECO:0000269" key="11">
    <source>
    </source>
</evidence>
<evidence type="ECO:0000269" key="12">
    <source>
    </source>
</evidence>
<evidence type="ECO:0000269" key="13">
    <source>
    </source>
</evidence>
<evidence type="ECO:0000269" key="14">
    <source>
    </source>
</evidence>
<evidence type="ECO:0000269" key="15">
    <source>
    </source>
</evidence>
<evidence type="ECO:0000269" key="16">
    <source>
    </source>
</evidence>
<evidence type="ECO:0000303" key="17">
    <source>
    </source>
</evidence>
<evidence type="ECO:0000305" key="18"/>
<evidence type="ECO:0000312" key="19">
    <source>
        <dbReference type="MGI" id="MGI:107945"/>
    </source>
</evidence>
<keyword id="KW-0963">Cytoplasm</keyword>
<keyword id="KW-0217">Developmental protein</keyword>
<keyword id="KW-0479">Metal-binding</keyword>
<keyword id="KW-0539">Nucleus</keyword>
<keyword id="KW-0597">Phosphoprotein</keyword>
<keyword id="KW-1185">Reference proteome</keyword>
<keyword id="KW-0677">Repeat</keyword>
<keyword id="KW-0687">Ribonucleoprotein</keyword>
<keyword id="KW-0694">RNA-binding</keyword>
<keyword id="KW-0862">Zinc</keyword>
<keyword id="KW-0863">Zinc-finger</keyword>
<name>TISD_MOUSE</name>
<sequence>MSTTLLSPFYDIDFLCKTEKSLANLNLNNMLDKKAVGTPVAAAPSSSFTPGFLRRHSASNLHALAHPVPSPGSCSPKFPGAPNGGGSSCGPAGGGGLASYGQLKEPSGGSGTALVTKESKFRDRSFSENGERSQHLLHLQQQQKGGSGSQINSTRYKTELCRPFEESGTCKYGEKCQFAHGFHELRSLTRHPKYKTELCRTFHTIGFCPYGPRCHFIHNADERRPAPSGGGGASGDLRAFGARDALHLGFAREPRPKLHHSLSFSGFPSGHHQPPGGLESPLLLDSPTSRTPPPPSSSASSCSSSASSCSSASAASTPSGAPTCCATAAAAALLYGPGGAEDLLSPGAPCASCSSSGANNAFAFGPELSSLITPLAIQTHNFAAAAAAAYYRNQQQGLTGPAPPPAQPPAAPAPPSPPFGFQLPRRLSESPVFDAPPSPPDSLSDRDSYLSGSLSSGSLSGSESPSLDPGRRLPIFSRLSISDD</sequence>
<dbReference type="EMBL" id="AK160955">
    <property type="protein sequence ID" value="BAE36112.1"/>
    <property type="molecule type" value="mRNA"/>
</dbReference>
<dbReference type="EMBL" id="AK170763">
    <property type="protein sequence ID" value="BAE42014.1"/>
    <property type="molecule type" value="mRNA"/>
</dbReference>
<dbReference type="EMBL" id="AC132455">
    <property type="status" value="NOT_ANNOTATED_CDS"/>
    <property type="molecule type" value="Genomic_DNA"/>
</dbReference>
<dbReference type="EMBL" id="BC139416">
    <property type="protein sequence ID" value="AAI39417.1"/>
    <property type="molecule type" value="mRNA"/>
</dbReference>
<dbReference type="EMBL" id="M97165">
    <property type="protein sequence ID" value="AAA39709.1"/>
    <property type="status" value="ALT_SEQ"/>
    <property type="molecule type" value="Genomic_DNA"/>
</dbReference>
<dbReference type="EMBL" id="M58564">
    <property type="protein sequence ID" value="AAA72946.1"/>
    <property type="status" value="ALT_SEQ"/>
    <property type="molecule type" value="mRNA"/>
</dbReference>
<dbReference type="CCDS" id="CCDS28998.1"/>
<dbReference type="PIR" id="C39590">
    <property type="entry name" value="C39590"/>
</dbReference>
<dbReference type="RefSeq" id="NP_001001806.1">
    <property type="nucleotide sequence ID" value="NM_001001806.2"/>
</dbReference>
<dbReference type="SMR" id="P23949"/>
<dbReference type="FunCoup" id="P23949">
    <property type="interactions" value="2807"/>
</dbReference>
<dbReference type="IntAct" id="P23949">
    <property type="interactions" value="4"/>
</dbReference>
<dbReference type="MINT" id="P23949"/>
<dbReference type="STRING" id="10090.ENSMUSP00000050820"/>
<dbReference type="GlyGen" id="P23949">
    <property type="glycosylation" value="2 sites, 1 O-linked glycan (1 site)"/>
</dbReference>
<dbReference type="iPTMnet" id="P23949"/>
<dbReference type="PhosphoSitePlus" id="P23949"/>
<dbReference type="jPOST" id="P23949"/>
<dbReference type="PaxDb" id="10090-ENSMUSP00000050820"/>
<dbReference type="PeptideAtlas" id="P23949"/>
<dbReference type="ProteomicsDB" id="262796"/>
<dbReference type="Pumba" id="P23949"/>
<dbReference type="Antibodypedia" id="14846">
    <property type="antibodies" value="245 antibodies from 31 providers"/>
</dbReference>
<dbReference type="DNASU" id="12193"/>
<dbReference type="Ensembl" id="ENSMUST00000060366.7">
    <property type="protein sequence ID" value="ENSMUSP00000050820.7"/>
    <property type="gene ID" value="ENSMUSG00000045817.9"/>
</dbReference>
<dbReference type="GeneID" id="12193"/>
<dbReference type="KEGG" id="mmu:12193"/>
<dbReference type="UCSC" id="uc008dsq.2">
    <property type="organism name" value="mouse"/>
</dbReference>
<dbReference type="AGR" id="MGI:107945"/>
<dbReference type="CTD" id="678"/>
<dbReference type="MGI" id="MGI:107945">
    <property type="gene designation" value="Zfp36l2"/>
</dbReference>
<dbReference type="VEuPathDB" id="HostDB:ENSMUSG00000045817"/>
<dbReference type="eggNOG" id="KOG1677">
    <property type="taxonomic scope" value="Eukaryota"/>
</dbReference>
<dbReference type="GeneTree" id="ENSGT00940000161584"/>
<dbReference type="HOGENOM" id="CLU_033040_1_0_1"/>
<dbReference type="InParanoid" id="P23949"/>
<dbReference type="OMA" id="AFYDMDM"/>
<dbReference type="OrthoDB" id="410307at2759"/>
<dbReference type="PhylomeDB" id="P23949"/>
<dbReference type="TreeFam" id="TF315463"/>
<dbReference type="BioGRID-ORCS" id="12193">
    <property type="hits" value="9 hits in 79 CRISPR screens"/>
</dbReference>
<dbReference type="ChiTaRS" id="Zfp36l2">
    <property type="organism name" value="mouse"/>
</dbReference>
<dbReference type="PRO" id="PR:P23949"/>
<dbReference type="Proteomes" id="UP000000589">
    <property type="component" value="Chromosome 17"/>
</dbReference>
<dbReference type="RNAct" id="P23949">
    <property type="molecule type" value="protein"/>
</dbReference>
<dbReference type="Bgee" id="ENSMUSG00000045817">
    <property type="expression patterns" value="Expressed in ureter smooth muscle and 245 other cell types or tissues"/>
</dbReference>
<dbReference type="GO" id="GO:0005737">
    <property type="term" value="C:cytoplasm"/>
    <property type="evidence" value="ECO:0000314"/>
    <property type="project" value="UniProtKB"/>
</dbReference>
<dbReference type="GO" id="GO:0005829">
    <property type="term" value="C:cytosol"/>
    <property type="evidence" value="ECO:0000304"/>
    <property type="project" value="Reactome"/>
</dbReference>
<dbReference type="GO" id="GO:0005634">
    <property type="term" value="C:nucleus"/>
    <property type="evidence" value="ECO:0000314"/>
    <property type="project" value="UniProtKB"/>
</dbReference>
<dbReference type="GO" id="GO:1990904">
    <property type="term" value="C:ribonucleoprotein complex"/>
    <property type="evidence" value="ECO:0007669"/>
    <property type="project" value="UniProtKB-KW"/>
</dbReference>
<dbReference type="GO" id="GO:0035925">
    <property type="term" value="F:mRNA 3'-UTR AU-rich region binding"/>
    <property type="evidence" value="ECO:0000314"/>
    <property type="project" value="UniProtKB"/>
</dbReference>
<dbReference type="GO" id="GO:0008270">
    <property type="term" value="F:zinc ion binding"/>
    <property type="evidence" value="ECO:0007669"/>
    <property type="project" value="UniProtKB-KW"/>
</dbReference>
<dbReference type="GO" id="GO:0061158">
    <property type="term" value="P:3'-UTR-mediated mRNA destabilization"/>
    <property type="evidence" value="ECO:0000314"/>
    <property type="project" value="UniProtKB"/>
</dbReference>
<dbReference type="GO" id="GO:0071364">
    <property type="term" value="P:cellular response to epidermal growth factor stimulus"/>
    <property type="evidence" value="ECO:0000250"/>
    <property type="project" value="UniProtKB"/>
</dbReference>
<dbReference type="GO" id="GO:0044344">
    <property type="term" value="P:cellular response to fibroblast growth factor stimulus"/>
    <property type="evidence" value="ECO:0000314"/>
    <property type="project" value="UniProtKB"/>
</dbReference>
<dbReference type="GO" id="GO:0071385">
    <property type="term" value="P:cellular response to glucocorticoid stimulus"/>
    <property type="evidence" value="ECO:0000250"/>
    <property type="project" value="UniProtKB"/>
</dbReference>
<dbReference type="GO" id="GO:0097011">
    <property type="term" value="P:cellular response to granulocyte macrophage colony-stimulating factor stimulus"/>
    <property type="evidence" value="ECO:0000250"/>
    <property type="project" value="UniProtKB"/>
</dbReference>
<dbReference type="GO" id="GO:0071560">
    <property type="term" value="P:cellular response to transforming growth factor beta stimulus"/>
    <property type="evidence" value="ECO:0000250"/>
    <property type="project" value="UniProtKB"/>
</dbReference>
<dbReference type="GO" id="GO:0071356">
    <property type="term" value="P:cellular response to tumor necrosis factor"/>
    <property type="evidence" value="ECO:0000250"/>
    <property type="project" value="UniProtKB"/>
</dbReference>
<dbReference type="GO" id="GO:0060216">
    <property type="term" value="P:definitive hemopoiesis"/>
    <property type="evidence" value="ECO:0000315"/>
    <property type="project" value="UniProtKB"/>
</dbReference>
<dbReference type="GO" id="GO:0070371">
    <property type="term" value="P:ERK1 and ERK2 cascade"/>
    <property type="evidence" value="ECO:0000250"/>
    <property type="project" value="UniProtKB"/>
</dbReference>
<dbReference type="GO" id="GO:0030097">
    <property type="term" value="P:hemopoiesis"/>
    <property type="evidence" value="ECO:0000315"/>
    <property type="project" value="UniProtKB"/>
</dbReference>
<dbReference type="GO" id="GO:0000165">
    <property type="term" value="P:MAPK cascade"/>
    <property type="evidence" value="ECO:0000314"/>
    <property type="project" value="UniProtKB"/>
</dbReference>
<dbReference type="GO" id="GO:0006402">
    <property type="term" value="P:mRNA catabolic process"/>
    <property type="evidence" value="ECO:0000314"/>
    <property type="project" value="UniProtKB"/>
</dbReference>
<dbReference type="GO" id="GO:0045599">
    <property type="term" value="P:negative regulation of fat cell differentiation"/>
    <property type="evidence" value="ECO:0000314"/>
    <property type="project" value="UniProtKB"/>
</dbReference>
<dbReference type="GO" id="GO:1901991">
    <property type="term" value="P:negative regulation of mitotic cell cycle phase transition"/>
    <property type="evidence" value="ECO:0000315"/>
    <property type="project" value="UniProtKB"/>
</dbReference>
<dbReference type="GO" id="GO:2000737">
    <property type="term" value="P:negative regulation of stem cell differentiation"/>
    <property type="evidence" value="ECO:0000315"/>
    <property type="project" value="UniProtKB"/>
</dbReference>
<dbReference type="GO" id="GO:0000288">
    <property type="term" value="P:nuclear-transcribed mRNA catabolic process, deadenylation-dependent decay"/>
    <property type="evidence" value="ECO:0000314"/>
    <property type="project" value="MGI"/>
</dbReference>
<dbReference type="GO" id="GO:1900153">
    <property type="term" value="P:positive regulation of nuclear-transcribed mRNA catabolic process, deadenylation-dependent decay"/>
    <property type="evidence" value="ECO:0000314"/>
    <property type="project" value="UniProtKB"/>
</dbReference>
<dbReference type="GO" id="GO:0045577">
    <property type="term" value="P:regulation of B cell differentiation"/>
    <property type="evidence" value="ECO:0000315"/>
    <property type="project" value="UniProtKB"/>
</dbReference>
<dbReference type="GO" id="GO:0043488">
    <property type="term" value="P:regulation of mRNA stability"/>
    <property type="evidence" value="ECO:0000314"/>
    <property type="project" value="UniProtKB"/>
</dbReference>
<dbReference type="GO" id="GO:0009611">
    <property type="term" value="P:response to wounding"/>
    <property type="evidence" value="ECO:0000250"/>
    <property type="project" value="UniProtKB"/>
</dbReference>
<dbReference type="GO" id="GO:0048103">
    <property type="term" value="P:somatic stem cell division"/>
    <property type="evidence" value="ECO:0000315"/>
    <property type="project" value="UniProtKB"/>
</dbReference>
<dbReference type="GO" id="GO:0035019">
    <property type="term" value="P:somatic stem cell population maintenance"/>
    <property type="evidence" value="ECO:0000315"/>
    <property type="project" value="UniProtKB"/>
</dbReference>
<dbReference type="GO" id="GO:0033077">
    <property type="term" value="P:T cell differentiation in thymus"/>
    <property type="evidence" value="ECO:0000315"/>
    <property type="project" value="UniProtKB"/>
</dbReference>
<dbReference type="FunFam" id="4.10.1000.10:FF:000001">
    <property type="entry name" value="zinc finger CCCH domain-containing protein 15-like"/>
    <property type="match status" value="1"/>
</dbReference>
<dbReference type="FunFam" id="4.10.1000.10:FF:000002">
    <property type="entry name" value="Zinc finger protein 36, C3H1 type-like 1"/>
    <property type="match status" value="1"/>
</dbReference>
<dbReference type="Gene3D" id="4.10.1000.10">
    <property type="entry name" value="Zinc finger, CCCH-type"/>
    <property type="match status" value="2"/>
</dbReference>
<dbReference type="InterPro" id="IPR007635">
    <property type="entry name" value="Tis11B_N"/>
</dbReference>
<dbReference type="InterPro" id="IPR045877">
    <property type="entry name" value="ZFP36-like"/>
</dbReference>
<dbReference type="InterPro" id="IPR000571">
    <property type="entry name" value="Znf_CCCH"/>
</dbReference>
<dbReference type="InterPro" id="IPR036855">
    <property type="entry name" value="Znf_CCCH_sf"/>
</dbReference>
<dbReference type="PANTHER" id="PTHR12547">
    <property type="entry name" value="CCCH ZINC FINGER/TIS11-RELATED"/>
    <property type="match status" value="1"/>
</dbReference>
<dbReference type="PANTHER" id="PTHR12547:SF174">
    <property type="entry name" value="MRNA DECAY ACTIVATOR PROTEIN ZFP36L2"/>
    <property type="match status" value="1"/>
</dbReference>
<dbReference type="Pfam" id="PF04553">
    <property type="entry name" value="Tis11B_N"/>
    <property type="match status" value="1"/>
</dbReference>
<dbReference type="Pfam" id="PF00642">
    <property type="entry name" value="zf-CCCH"/>
    <property type="match status" value="2"/>
</dbReference>
<dbReference type="SMART" id="SM00356">
    <property type="entry name" value="ZnF_C3H1"/>
    <property type="match status" value="2"/>
</dbReference>
<dbReference type="SUPFAM" id="SSF90229">
    <property type="entry name" value="CCCH zinc finger"/>
    <property type="match status" value="2"/>
</dbReference>
<dbReference type="PROSITE" id="PS50103">
    <property type="entry name" value="ZF_C3H1"/>
    <property type="match status" value="2"/>
</dbReference>